<name>DIM1_MOUSE</name>
<dbReference type="EC" id="2.1.1.183" evidence="1"/>
<dbReference type="EMBL" id="AK011544">
    <property type="protein sequence ID" value="BAB27687.1"/>
    <property type="molecule type" value="mRNA"/>
</dbReference>
<dbReference type="EMBL" id="AK078186">
    <property type="protein sequence ID" value="BAC37166.1"/>
    <property type="status" value="ALT_SEQ"/>
    <property type="molecule type" value="mRNA"/>
</dbReference>
<dbReference type="EMBL" id="AK161333">
    <property type="protein sequence ID" value="BAE36330.1"/>
    <property type="molecule type" value="mRNA"/>
</dbReference>
<dbReference type="EMBL" id="BC019799">
    <property type="protein sequence ID" value="AAH19799.1"/>
    <property type="molecule type" value="mRNA"/>
</dbReference>
<dbReference type="CCDS" id="CCDS26758.1"/>
<dbReference type="RefSeq" id="NP_079723.1">
    <property type="nucleotide sequence ID" value="NM_025447.4"/>
</dbReference>
<dbReference type="SMR" id="Q9D0D4"/>
<dbReference type="BioGRID" id="211329">
    <property type="interactions" value="4"/>
</dbReference>
<dbReference type="FunCoup" id="Q9D0D4">
    <property type="interactions" value="2785"/>
</dbReference>
<dbReference type="STRING" id="10090.ENSMUSP00000022203"/>
<dbReference type="GlyGen" id="Q9D0D4">
    <property type="glycosylation" value="2 sites, 1 N-linked glycan (1 site), 1 O-linked glycan (1 site)"/>
</dbReference>
<dbReference type="iPTMnet" id="Q9D0D4"/>
<dbReference type="PhosphoSitePlus" id="Q9D0D4"/>
<dbReference type="PaxDb" id="10090-ENSMUSP00000022203"/>
<dbReference type="PeptideAtlas" id="Q9D0D4"/>
<dbReference type="ProteomicsDB" id="279385"/>
<dbReference type="Pumba" id="Q9D0D4"/>
<dbReference type="Antibodypedia" id="23684">
    <property type="antibodies" value="161 antibodies from 25 providers"/>
</dbReference>
<dbReference type="DNASU" id="66254"/>
<dbReference type="Ensembl" id="ENSMUST00000022203.10">
    <property type="protein sequence ID" value="ENSMUSP00000022203.9"/>
    <property type="gene ID" value="ENSMUSG00000021692.10"/>
</dbReference>
<dbReference type="GeneID" id="66254"/>
<dbReference type="KEGG" id="mmu:66254"/>
<dbReference type="UCSC" id="uc007rua.2">
    <property type="organism name" value="mouse"/>
</dbReference>
<dbReference type="AGR" id="MGI:1913504"/>
<dbReference type="CTD" id="27292"/>
<dbReference type="MGI" id="MGI:1913504">
    <property type="gene designation" value="Dimt1"/>
</dbReference>
<dbReference type="VEuPathDB" id="HostDB:ENSMUSG00000021692"/>
<dbReference type="eggNOG" id="KOG0820">
    <property type="taxonomic scope" value="Eukaryota"/>
</dbReference>
<dbReference type="GeneTree" id="ENSGT00950000183142"/>
<dbReference type="HOGENOM" id="CLU_041220_2_3_1"/>
<dbReference type="InParanoid" id="Q9D0D4"/>
<dbReference type="OMA" id="GMFQKEV"/>
<dbReference type="OrthoDB" id="74991at2759"/>
<dbReference type="PhylomeDB" id="Q9D0D4"/>
<dbReference type="TreeFam" id="TF354255"/>
<dbReference type="BioGRID-ORCS" id="66254">
    <property type="hits" value="29 hits in 81 CRISPR screens"/>
</dbReference>
<dbReference type="PRO" id="PR:Q9D0D4"/>
<dbReference type="Proteomes" id="UP000000589">
    <property type="component" value="Chromosome 13"/>
</dbReference>
<dbReference type="RNAct" id="Q9D0D4">
    <property type="molecule type" value="protein"/>
</dbReference>
<dbReference type="Bgee" id="ENSMUSG00000021692">
    <property type="expression patterns" value="Expressed in epiblast (generic) and 69 other cell types or tissues"/>
</dbReference>
<dbReference type="ExpressionAtlas" id="Q9D0D4">
    <property type="expression patterns" value="baseline and differential"/>
</dbReference>
<dbReference type="GO" id="GO:0005829">
    <property type="term" value="C:cytosol"/>
    <property type="evidence" value="ECO:0007669"/>
    <property type="project" value="Ensembl"/>
</dbReference>
<dbReference type="GO" id="GO:0005730">
    <property type="term" value="C:nucleolus"/>
    <property type="evidence" value="ECO:0000250"/>
    <property type="project" value="UniProtKB"/>
</dbReference>
<dbReference type="GO" id="GO:0005654">
    <property type="term" value="C:nucleoplasm"/>
    <property type="evidence" value="ECO:0007669"/>
    <property type="project" value="UniProtKB-SubCell"/>
</dbReference>
<dbReference type="GO" id="GO:0032040">
    <property type="term" value="C:small-subunit processome"/>
    <property type="evidence" value="ECO:0000250"/>
    <property type="project" value="UniProtKB"/>
</dbReference>
<dbReference type="GO" id="GO:0052909">
    <property type="term" value="F:18S rRNA (adenine(1779)-N(6)/adenine(1780)-N(6))-dimethyltransferase activity"/>
    <property type="evidence" value="ECO:0000250"/>
    <property type="project" value="UniProtKB"/>
</dbReference>
<dbReference type="GO" id="GO:0003723">
    <property type="term" value="F:RNA binding"/>
    <property type="evidence" value="ECO:0007669"/>
    <property type="project" value="UniProtKB-KW"/>
</dbReference>
<dbReference type="GO" id="GO:2000234">
    <property type="term" value="P:positive regulation of rRNA processing"/>
    <property type="evidence" value="ECO:0000250"/>
    <property type="project" value="UniProtKB"/>
</dbReference>
<dbReference type="GO" id="GO:0042274">
    <property type="term" value="P:ribosomal small subunit biogenesis"/>
    <property type="evidence" value="ECO:0000250"/>
    <property type="project" value="UniProtKB"/>
</dbReference>
<dbReference type="GO" id="GO:0031167">
    <property type="term" value="P:rRNA methylation"/>
    <property type="evidence" value="ECO:0000250"/>
    <property type="project" value="UniProtKB"/>
</dbReference>
<dbReference type="CDD" id="cd02440">
    <property type="entry name" value="AdoMet_MTases"/>
    <property type="match status" value="1"/>
</dbReference>
<dbReference type="FunFam" id="1.10.8.480:FF:000001">
    <property type="entry name" value="rRNA adenine N(6)-methyltransferase"/>
    <property type="match status" value="1"/>
</dbReference>
<dbReference type="FunFam" id="3.40.50.150:FF:000007">
    <property type="entry name" value="rRNA adenine N(6)-methyltransferase"/>
    <property type="match status" value="1"/>
</dbReference>
<dbReference type="Gene3D" id="1.10.8.480">
    <property type="match status" value="1"/>
</dbReference>
<dbReference type="Gene3D" id="3.40.50.150">
    <property type="entry name" value="Vaccinia Virus protein VP39"/>
    <property type="match status" value="1"/>
</dbReference>
<dbReference type="InterPro" id="IPR001737">
    <property type="entry name" value="KsgA/Erm"/>
</dbReference>
<dbReference type="InterPro" id="IPR020596">
    <property type="entry name" value="rRNA_Ade_Mease_Trfase_CS"/>
</dbReference>
<dbReference type="InterPro" id="IPR020598">
    <property type="entry name" value="rRNA_Ade_methylase_Trfase_N"/>
</dbReference>
<dbReference type="InterPro" id="IPR011530">
    <property type="entry name" value="rRNA_adenine_dimethylase"/>
</dbReference>
<dbReference type="InterPro" id="IPR029063">
    <property type="entry name" value="SAM-dependent_MTases_sf"/>
</dbReference>
<dbReference type="NCBIfam" id="TIGR00755">
    <property type="entry name" value="ksgA"/>
    <property type="match status" value="1"/>
</dbReference>
<dbReference type="PANTHER" id="PTHR11727">
    <property type="entry name" value="DIMETHYLADENOSINE TRANSFERASE"/>
    <property type="match status" value="1"/>
</dbReference>
<dbReference type="PANTHER" id="PTHR11727:SF7">
    <property type="entry name" value="DIMETHYLADENOSINE TRANSFERASE-RELATED"/>
    <property type="match status" value="1"/>
</dbReference>
<dbReference type="Pfam" id="PF00398">
    <property type="entry name" value="RrnaAD"/>
    <property type="match status" value="1"/>
</dbReference>
<dbReference type="SMART" id="SM00650">
    <property type="entry name" value="rADc"/>
    <property type="match status" value="1"/>
</dbReference>
<dbReference type="SUPFAM" id="SSF53335">
    <property type="entry name" value="S-adenosyl-L-methionine-dependent methyltransferases"/>
    <property type="match status" value="1"/>
</dbReference>
<dbReference type="PROSITE" id="PS01131">
    <property type="entry name" value="RRNA_A_DIMETH"/>
    <property type="match status" value="1"/>
</dbReference>
<dbReference type="PROSITE" id="PS51689">
    <property type="entry name" value="SAM_RNA_A_N6_MT"/>
    <property type="match status" value="1"/>
</dbReference>
<accession>Q9D0D4</accession>
<accession>Q3TTJ5</accession>
<accession>Q8BVH8</accession>
<keyword id="KW-0489">Methyltransferase</keyword>
<keyword id="KW-0539">Nucleus</keyword>
<keyword id="KW-1185">Reference proteome</keyword>
<keyword id="KW-0694">RNA-binding</keyword>
<keyword id="KW-0698">rRNA processing</keyword>
<keyword id="KW-0949">S-adenosyl-L-methionine</keyword>
<keyword id="KW-0808">Transferase</keyword>
<protein>
    <recommendedName>
        <fullName>Dimethyladenosine transferase</fullName>
        <ecNumber evidence="1">2.1.1.183</ecNumber>
    </recommendedName>
    <alternativeName>
        <fullName>18S rRNA (adenine(1779)-N(6)/adenine(1780)-N(6))-dimethyltransferase</fullName>
    </alternativeName>
    <alternativeName>
        <fullName>18S rRNA dimethylase</fullName>
    </alternativeName>
    <alternativeName>
        <fullName>DIM1 dimethyladenosine transferase 1 homolog</fullName>
    </alternativeName>
    <alternativeName>
        <fullName>DIM1 dimethyladenosine transferase 1-like</fullName>
    </alternativeName>
    <alternativeName>
        <fullName>S-adenosylmethionine-6-N',N'-adenosyl(rRNA) dimethyltransferase</fullName>
    </alternativeName>
</protein>
<gene>
    <name type="primary">Dimt1</name>
    <name type="synonym">Dimt1l</name>
</gene>
<reference key="1">
    <citation type="journal article" date="2005" name="Science">
        <title>The transcriptional landscape of the mammalian genome.</title>
        <authorList>
            <person name="Carninci P."/>
            <person name="Kasukawa T."/>
            <person name="Katayama S."/>
            <person name="Gough J."/>
            <person name="Frith M.C."/>
            <person name="Maeda N."/>
            <person name="Oyama R."/>
            <person name="Ravasi T."/>
            <person name="Lenhard B."/>
            <person name="Wells C."/>
            <person name="Kodzius R."/>
            <person name="Shimokawa K."/>
            <person name="Bajic V.B."/>
            <person name="Brenner S.E."/>
            <person name="Batalov S."/>
            <person name="Forrest A.R."/>
            <person name="Zavolan M."/>
            <person name="Davis M.J."/>
            <person name="Wilming L.G."/>
            <person name="Aidinis V."/>
            <person name="Allen J.E."/>
            <person name="Ambesi-Impiombato A."/>
            <person name="Apweiler R."/>
            <person name="Aturaliya R.N."/>
            <person name="Bailey T.L."/>
            <person name="Bansal M."/>
            <person name="Baxter L."/>
            <person name="Beisel K.W."/>
            <person name="Bersano T."/>
            <person name="Bono H."/>
            <person name="Chalk A.M."/>
            <person name="Chiu K.P."/>
            <person name="Choudhary V."/>
            <person name="Christoffels A."/>
            <person name="Clutterbuck D.R."/>
            <person name="Crowe M.L."/>
            <person name="Dalla E."/>
            <person name="Dalrymple B.P."/>
            <person name="de Bono B."/>
            <person name="Della Gatta G."/>
            <person name="di Bernardo D."/>
            <person name="Down T."/>
            <person name="Engstrom P."/>
            <person name="Fagiolini M."/>
            <person name="Faulkner G."/>
            <person name="Fletcher C.F."/>
            <person name="Fukushima T."/>
            <person name="Furuno M."/>
            <person name="Futaki S."/>
            <person name="Gariboldi M."/>
            <person name="Georgii-Hemming P."/>
            <person name="Gingeras T.R."/>
            <person name="Gojobori T."/>
            <person name="Green R.E."/>
            <person name="Gustincich S."/>
            <person name="Harbers M."/>
            <person name="Hayashi Y."/>
            <person name="Hensch T.K."/>
            <person name="Hirokawa N."/>
            <person name="Hill D."/>
            <person name="Huminiecki L."/>
            <person name="Iacono M."/>
            <person name="Ikeo K."/>
            <person name="Iwama A."/>
            <person name="Ishikawa T."/>
            <person name="Jakt M."/>
            <person name="Kanapin A."/>
            <person name="Katoh M."/>
            <person name="Kawasawa Y."/>
            <person name="Kelso J."/>
            <person name="Kitamura H."/>
            <person name="Kitano H."/>
            <person name="Kollias G."/>
            <person name="Krishnan S.P."/>
            <person name="Kruger A."/>
            <person name="Kummerfeld S.K."/>
            <person name="Kurochkin I.V."/>
            <person name="Lareau L.F."/>
            <person name="Lazarevic D."/>
            <person name="Lipovich L."/>
            <person name="Liu J."/>
            <person name="Liuni S."/>
            <person name="McWilliam S."/>
            <person name="Madan Babu M."/>
            <person name="Madera M."/>
            <person name="Marchionni L."/>
            <person name="Matsuda H."/>
            <person name="Matsuzawa S."/>
            <person name="Miki H."/>
            <person name="Mignone F."/>
            <person name="Miyake S."/>
            <person name="Morris K."/>
            <person name="Mottagui-Tabar S."/>
            <person name="Mulder N."/>
            <person name="Nakano N."/>
            <person name="Nakauchi H."/>
            <person name="Ng P."/>
            <person name="Nilsson R."/>
            <person name="Nishiguchi S."/>
            <person name="Nishikawa S."/>
            <person name="Nori F."/>
            <person name="Ohara O."/>
            <person name="Okazaki Y."/>
            <person name="Orlando V."/>
            <person name="Pang K.C."/>
            <person name="Pavan W.J."/>
            <person name="Pavesi G."/>
            <person name="Pesole G."/>
            <person name="Petrovsky N."/>
            <person name="Piazza S."/>
            <person name="Reed J."/>
            <person name="Reid J.F."/>
            <person name="Ring B.Z."/>
            <person name="Ringwald M."/>
            <person name="Rost B."/>
            <person name="Ruan Y."/>
            <person name="Salzberg S.L."/>
            <person name="Sandelin A."/>
            <person name="Schneider C."/>
            <person name="Schoenbach C."/>
            <person name="Sekiguchi K."/>
            <person name="Semple C.A."/>
            <person name="Seno S."/>
            <person name="Sessa L."/>
            <person name="Sheng Y."/>
            <person name="Shibata Y."/>
            <person name="Shimada H."/>
            <person name="Shimada K."/>
            <person name="Silva D."/>
            <person name="Sinclair B."/>
            <person name="Sperling S."/>
            <person name="Stupka E."/>
            <person name="Sugiura K."/>
            <person name="Sultana R."/>
            <person name="Takenaka Y."/>
            <person name="Taki K."/>
            <person name="Tammoja K."/>
            <person name="Tan S.L."/>
            <person name="Tang S."/>
            <person name="Taylor M.S."/>
            <person name="Tegner J."/>
            <person name="Teichmann S.A."/>
            <person name="Ueda H.R."/>
            <person name="van Nimwegen E."/>
            <person name="Verardo R."/>
            <person name="Wei C.L."/>
            <person name="Yagi K."/>
            <person name="Yamanishi H."/>
            <person name="Zabarovsky E."/>
            <person name="Zhu S."/>
            <person name="Zimmer A."/>
            <person name="Hide W."/>
            <person name="Bult C."/>
            <person name="Grimmond S.M."/>
            <person name="Teasdale R.D."/>
            <person name="Liu E.T."/>
            <person name="Brusic V."/>
            <person name="Quackenbush J."/>
            <person name="Wahlestedt C."/>
            <person name="Mattick J.S."/>
            <person name="Hume D.A."/>
            <person name="Kai C."/>
            <person name="Sasaki D."/>
            <person name="Tomaru Y."/>
            <person name="Fukuda S."/>
            <person name="Kanamori-Katayama M."/>
            <person name="Suzuki M."/>
            <person name="Aoki J."/>
            <person name="Arakawa T."/>
            <person name="Iida J."/>
            <person name="Imamura K."/>
            <person name="Itoh M."/>
            <person name="Kato T."/>
            <person name="Kawaji H."/>
            <person name="Kawagashira N."/>
            <person name="Kawashima T."/>
            <person name="Kojima M."/>
            <person name="Kondo S."/>
            <person name="Konno H."/>
            <person name="Nakano K."/>
            <person name="Ninomiya N."/>
            <person name="Nishio T."/>
            <person name="Okada M."/>
            <person name="Plessy C."/>
            <person name="Shibata K."/>
            <person name="Shiraki T."/>
            <person name="Suzuki S."/>
            <person name="Tagami M."/>
            <person name="Waki K."/>
            <person name="Watahiki A."/>
            <person name="Okamura-Oho Y."/>
            <person name="Suzuki H."/>
            <person name="Kawai J."/>
            <person name="Hayashizaki Y."/>
        </authorList>
    </citation>
    <scope>NUCLEOTIDE SEQUENCE [LARGE SCALE MRNA]</scope>
    <source>
        <strain>C57BL/6J</strain>
        <tissue>Embryo</tissue>
        <tissue>Testis</tissue>
    </source>
</reference>
<reference key="2">
    <citation type="journal article" date="2004" name="Genome Res.">
        <title>The status, quality, and expansion of the NIH full-length cDNA project: the Mammalian Gene Collection (MGC).</title>
        <authorList>
            <consortium name="The MGC Project Team"/>
        </authorList>
    </citation>
    <scope>NUCLEOTIDE SEQUENCE [LARGE SCALE MRNA]</scope>
    <source>
        <tissue>Liver</tissue>
    </source>
</reference>
<proteinExistence type="evidence at transcript level"/>
<evidence type="ECO:0000250" key="1">
    <source>
        <dbReference type="UniProtKB" id="Q9UNQ2"/>
    </source>
</evidence>
<evidence type="ECO:0000255" key="2">
    <source>
        <dbReference type="PROSITE-ProRule" id="PRU01026"/>
    </source>
</evidence>
<evidence type="ECO:0000305" key="3"/>
<feature type="chain" id="PRO_0000101467" description="Dimethyladenosine transferase">
    <location>
        <begin position="1"/>
        <end position="313"/>
    </location>
</feature>
<feature type="binding site" evidence="2">
    <location>
        <position position="37"/>
    </location>
    <ligand>
        <name>S-adenosyl-L-methionine</name>
        <dbReference type="ChEBI" id="CHEBI:59789"/>
    </ligand>
</feature>
<feature type="binding site" evidence="2">
    <location>
        <position position="39"/>
    </location>
    <ligand>
        <name>S-adenosyl-L-methionine</name>
        <dbReference type="ChEBI" id="CHEBI:59789"/>
    </ligand>
</feature>
<feature type="binding site" evidence="2">
    <location>
        <position position="64"/>
    </location>
    <ligand>
        <name>S-adenosyl-L-methionine</name>
        <dbReference type="ChEBI" id="CHEBI:59789"/>
    </ligand>
</feature>
<feature type="binding site" evidence="2">
    <location>
        <position position="85"/>
    </location>
    <ligand>
        <name>S-adenosyl-L-methionine</name>
        <dbReference type="ChEBI" id="CHEBI:59789"/>
    </ligand>
</feature>
<feature type="binding site" evidence="2">
    <location>
        <position position="113"/>
    </location>
    <ligand>
        <name>S-adenosyl-L-methionine</name>
        <dbReference type="ChEBI" id="CHEBI:59789"/>
    </ligand>
</feature>
<feature type="binding site" evidence="2">
    <location>
        <position position="128"/>
    </location>
    <ligand>
        <name>S-adenosyl-L-methionine</name>
        <dbReference type="ChEBI" id="CHEBI:59789"/>
    </ligand>
</feature>
<organism>
    <name type="scientific">Mus musculus</name>
    <name type="common">Mouse</name>
    <dbReference type="NCBI Taxonomy" id="10090"/>
    <lineage>
        <taxon>Eukaryota</taxon>
        <taxon>Metazoa</taxon>
        <taxon>Chordata</taxon>
        <taxon>Craniata</taxon>
        <taxon>Vertebrata</taxon>
        <taxon>Euteleostomi</taxon>
        <taxon>Mammalia</taxon>
        <taxon>Eutheria</taxon>
        <taxon>Euarchontoglires</taxon>
        <taxon>Glires</taxon>
        <taxon>Rodentia</taxon>
        <taxon>Myomorpha</taxon>
        <taxon>Muroidea</taxon>
        <taxon>Muridae</taxon>
        <taxon>Murinae</taxon>
        <taxon>Mus</taxon>
        <taxon>Mus</taxon>
    </lineage>
</organism>
<sequence length="313" mass="35274">MPKAKSAASSRRRDRQEQRRELKRAGGLMFNTGIGQHILKNPLIVNSIIDKAALRPTDVVLEVGPGTGNMTVKLLEKAKKVVACELDPRLVAELHKRVQGTPLASKLQVLVGDVLKSDLPFFDACVANLPYQISSPFVFKLLLHRPFFRCAILMFQREFALRLVAKPGDKLYCRLSINTQLLARVDHLMKVGKNNFRPPPKVESSVVRIEPKNPPPPINFQEWDGLVRITFVRKNKTLSAAFKSSAVQQLLEKNYRIHCSVQNTVIPEDFSIADKIQQILTSTGFSDKRARSMDIDDFIRLLHGFNAEGIHFS</sequence>
<comment type="function">
    <text evidence="1">Specifically dimethylates two adjacent adenosines in the loop of a conserved hairpin near the 3'-end of 18S rRNA in the 40S particle. Involved in the pre-rRNA processing steps leading to small-subunit rRNA production independently of its RNA-modifying catalytic activity. Part of the small subunit (SSU) processome, first precursor of the small eukaryotic ribosomal subunit. During the assembly of the SSU processome in the nucleolus, many ribosome biogenesis factors, an RNA chaperone and ribosomal proteins associate with the nascent pre-rRNA and work in concert to generate RNA folding, modifications, rearrangements and cleavage as well as targeted degradation of pre-ribosomal RNA by the RNA exosome.</text>
</comment>
<comment type="catalytic activity">
    <reaction evidence="1">
        <text>adenosine(1779)/adenosine(1780) in 18S rRNA + 4 S-adenosyl-L-methionine = N(6)-dimethyladenosine(1779)/N(6)-dimethyladenosine(1780) in 18S rRNA + 4 S-adenosyl-L-homocysteine + 4 H(+)</text>
        <dbReference type="Rhea" id="RHEA:42780"/>
        <dbReference type="Rhea" id="RHEA-COMP:10234"/>
        <dbReference type="Rhea" id="RHEA-COMP:10236"/>
        <dbReference type="ChEBI" id="CHEBI:15378"/>
        <dbReference type="ChEBI" id="CHEBI:57856"/>
        <dbReference type="ChEBI" id="CHEBI:59789"/>
        <dbReference type="ChEBI" id="CHEBI:74411"/>
        <dbReference type="ChEBI" id="CHEBI:74493"/>
        <dbReference type="EC" id="2.1.1.183"/>
    </reaction>
</comment>
<comment type="subunit">
    <text evidence="1">Part of the small subunit (SSU) processome, composed of more than 70 proteins and the RNA chaperone small nucleolar RNA (snoRNA) U3.</text>
</comment>
<comment type="subcellular location">
    <subcellularLocation>
        <location evidence="1">Nucleus</location>
        <location evidence="1">Nucleoplasm</location>
    </subcellularLocation>
    <subcellularLocation>
        <location evidence="1">Nucleus</location>
        <location evidence="1">Nucleolus</location>
    </subcellularLocation>
</comment>
<comment type="similarity">
    <text evidence="2">Belongs to the class I-like SAM-binding methyltransferase superfamily. rRNA adenine N(6)-methyltransferase family.</text>
</comment>
<comment type="sequence caution" evidence="3">
    <conflict type="miscellaneous discrepancy">
        <sequence resource="EMBL-CDS" id="BAC37166"/>
    </conflict>
    <text>Introns retention.</text>
</comment>